<feature type="chain" id="PRO_0000068117" description="Glucose-6-phosphate 1-dehydrogenase">
    <location>
        <begin position="1"/>
        <end position="439"/>
    </location>
</feature>
<feature type="active site" description="Proton acceptor" evidence="1">
    <location>
        <position position="192"/>
    </location>
</feature>
<feature type="binding site" evidence="1">
    <location>
        <position position="100"/>
    </location>
    <ligand>
        <name>NADP(+)</name>
        <dbReference type="ChEBI" id="CHEBI:58349"/>
    </ligand>
</feature>
<feature type="binding site" evidence="1">
    <location>
        <position position="130"/>
    </location>
    <ligand>
        <name>substrate</name>
    </ligand>
</feature>
<feature type="binding site" evidence="1">
    <location>
        <position position="134"/>
    </location>
    <ligand>
        <name>substrate</name>
    </ligand>
</feature>
<feature type="binding site" evidence="1">
    <location>
        <position position="168"/>
    </location>
    <ligand>
        <name>substrate</name>
    </ligand>
</feature>
<feature type="binding site" evidence="1">
    <location>
        <position position="187"/>
    </location>
    <ligand>
        <name>substrate</name>
    </ligand>
</feature>
<feature type="binding site" evidence="1">
    <location>
        <position position="288"/>
    </location>
    <ligand>
        <name>substrate</name>
    </ligand>
</feature>
<sequence length="439" mass="51063">MKLAVQHFSHSSEIDIRVWESLENRIFYHQANFSDAEGYSVLKAYLEQLDQQYGTQGNRLFYLSTPPDYFQEIIRNLNRHQLFYHEQGAQQPWSRLIIEKPFGVNLETARELQQCIDANIDEESVYRIDHYLGKETVQNILTIRFANTLFESCWNSQYIDHVQISVSESIGIGSRGNFFEKSGMLRDMVQNHLTQLLCLLTMEPPSEFFSEEIKKEKIKILKKILPIREEDAVRGQYGEGIVQDVSVLGYREEENVDPNSSVETYVALKLFIDNPRWKGVPFYLQAGKRLPKRTTDIAVIFKKSSYNLFNAENCPLCPLENDLLIIRIQPDEGVALQFNCKVPGTNKLVRPVKMDFRYDSYFNTVTPEAYERLLCDCILGDRTLFTSNEEVLASWELFSPLLEKWSQVRPIFPNYMAGSLRPQEADELLSRDGKAWRPY</sequence>
<proteinExistence type="inferred from homology"/>
<organism>
    <name type="scientific">Chlamydia trachomatis serovar D (strain ATCC VR-885 / DSM 19411 / UW-3/Cx)</name>
    <dbReference type="NCBI Taxonomy" id="272561"/>
    <lineage>
        <taxon>Bacteria</taxon>
        <taxon>Pseudomonadati</taxon>
        <taxon>Chlamydiota</taxon>
        <taxon>Chlamydiia</taxon>
        <taxon>Chlamydiales</taxon>
        <taxon>Chlamydiaceae</taxon>
        <taxon>Chlamydia/Chlamydophila group</taxon>
        <taxon>Chlamydia</taxon>
    </lineage>
</organism>
<keyword id="KW-0119">Carbohydrate metabolism</keyword>
<keyword id="KW-0313">Glucose metabolism</keyword>
<keyword id="KW-0521">NADP</keyword>
<keyword id="KW-0560">Oxidoreductase</keyword>
<keyword id="KW-1185">Reference proteome</keyword>
<gene>
    <name evidence="1" type="primary">zwf</name>
    <name type="ordered locus">CT_185</name>
</gene>
<accession>O84188</accession>
<dbReference type="EC" id="1.1.1.49" evidence="1"/>
<dbReference type="EMBL" id="AE001273">
    <property type="protein sequence ID" value="AAC67777.1"/>
    <property type="molecule type" value="Genomic_DNA"/>
</dbReference>
<dbReference type="PIR" id="B71546">
    <property type="entry name" value="B71546"/>
</dbReference>
<dbReference type="RefSeq" id="NP_219689.3">
    <property type="nucleotide sequence ID" value="NC_000117.1"/>
</dbReference>
<dbReference type="RefSeq" id="WP_024125993.1">
    <property type="nucleotide sequence ID" value="NC_000117.1"/>
</dbReference>
<dbReference type="SMR" id="O84188"/>
<dbReference type="FunCoup" id="O84188">
    <property type="interactions" value="148"/>
</dbReference>
<dbReference type="STRING" id="272561.CT_185"/>
<dbReference type="EnsemblBacteria" id="AAC67777">
    <property type="protein sequence ID" value="AAC67777"/>
    <property type="gene ID" value="CT_185"/>
</dbReference>
<dbReference type="GeneID" id="884944"/>
<dbReference type="KEGG" id="ctr:CT_185"/>
<dbReference type="PATRIC" id="fig|272561.5.peg.199"/>
<dbReference type="HOGENOM" id="CLU_013524_5_1_0"/>
<dbReference type="InParanoid" id="O84188"/>
<dbReference type="OrthoDB" id="9802739at2"/>
<dbReference type="UniPathway" id="UPA00115">
    <property type="reaction ID" value="UER00408"/>
</dbReference>
<dbReference type="Proteomes" id="UP000000431">
    <property type="component" value="Chromosome"/>
</dbReference>
<dbReference type="GO" id="GO:0005829">
    <property type="term" value="C:cytosol"/>
    <property type="evidence" value="ECO:0000318"/>
    <property type="project" value="GO_Central"/>
</dbReference>
<dbReference type="GO" id="GO:0004345">
    <property type="term" value="F:glucose-6-phosphate dehydrogenase activity"/>
    <property type="evidence" value="ECO:0000318"/>
    <property type="project" value="GO_Central"/>
</dbReference>
<dbReference type="GO" id="GO:0050661">
    <property type="term" value="F:NADP binding"/>
    <property type="evidence" value="ECO:0007669"/>
    <property type="project" value="UniProtKB-UniRule"/>
</dbReference>
<dbReference type="GO" id="GO:0006006">
    <property type="term" value="P:glucose metabolic process"/>
    <property type="evidence" value="ECO:0000318"/>
    <property type="project" value="GO_Central"/>
</dbReference>
<dbReference type="GO" id="GO:0009051">
    <property type="term" value="P:pentose-phosphate shunt, oxidative branch"/>
    <property type="evidence" value="ECO:0000318"/>
    <property type="project" value="GO_Central"/>
</dbReference>
<dbReference type="Gene3D" id="3.30.360.10">
    <property type="entry name" value="Dihydrodipicolinate Reductase, domain 2"/>
    <property type="match status" value="1"/>
</dbReference>
<dbReference type="Gene3D" id="3.40.50.720">
    <property type="entry name" value="NAD(P)-binding Rossmann-like Domain"/>
    <property type="match status" value="1"/>
</dbReference>
<dbReference type="HAMAP" id="MF_00966">
    <property type="entry name" value="G6PD"/>
    <property type="match status" value="1"/>
</dbReference>
<dbReference type="InterPro" id="IPR001282">
    <property type="entry name" value="G6P_DH"/>
</dbReference>
<dbReference type="InterPro" id="IPR019796">
    <property type="entry name" value="G6P_DH_AS"/>
</dbReference>
<dbReference type="InterPro" id="IPR022675">
    <property type="entry name" value="G6P_DH_C"/>
</dbReference>
<dbReference type="InterPro" id="IPR022674">
    <property type="entry name" value="G6P_DH_NAD-bd"/>
</dbReference>
<dbReference type="InterPro" id="IPR036291">
    <property type="entry name" value="NAD(P)-bd_dom_sf"/>
</dbReference>
<dbReference type="NCBIfam" id="TIGR00871">
    <property type="entry name" value="zwf"/>
    <property type="match status" value="1"/>
</dbReference>
<dbReference type="PANTHER" id="PTHR23429:SF0">
    <property type="entry name" value="GLUCOSE-6-PHOSPHATE 1-DEHYDROGENASE"/>
    <property type="match status" value="1"/>
</dbReference>
<dbReference type="PANTHER" id="PTHR23429">
    <property type="entry name" value="GLUCOSE-6-PHOSPHATE 1-DEHYDROGENASE G6PD"/>
    <property type="match status" value="1"/>
</dbReference>
<dbReference type="Pfam" id="PF02781">
    <property type="entry name" value="G6PD_C"/>
    <property type="match status" value="1"/>
</dbReference>
<dbReference type="Pfam" id="PF00479">
    <property type="entry name" value="G6PD_N"/>
    <property type="match status" value="1"/>
</dbReference>
<dbReference type="PIRSF" id="PIRSF000110">
    <property type="entry name" value="G6PD"/>
    <property type="match status" value="1"/>
</dbReference>
<dbReference type="PRINTS" id="PR00079">
    <property type="entry name" value="G6PDHDRGNASE"/>
</dbReference>
<dbReference type="SUPFAM" id="SSF55347">
    <property type="entry name" value="Glyceraldehyde-3-phosphate dehydrogenase-like, C-terminal domain"/>
    <property type="match status" value="1"/>
</dbReference>
<dbReference type="SUPFAM" id="SSF51735">
    <property type="entry name" value="NAD(P)-binding Rossmann-fold domains"/>
    <property type="match status" value="1"/>
</dbReference>
<dbReference type="PROSITE" id="PS00069">
    <property type="entry name" value="G6P_DEHYDROGENASE"/>
    <property type="match status" value="1"/>
</dbReference>
<reference key="1">
    <citation type="journal article" date="1998" name="Science">
        <title>Genome sequence of an obligate intracellular pathogen of humans: Chlamydia trachomatis.</title>
        <authorList>
            <person name="Stephens R.S."/>
            <person name="Kalman S."/>
            <person name="Lammel C.J."/>
            <person name="Fan J."/>
            <person name="Marathe R."/>
            <person name="Aravind L."/>
            <person name="Mitchell W.P."/>
            <person name="Olinger L."/>
            <person name="Tatusov R.L."/>
            <person name="Zhao Q."/>
            <person name="Koonin E.V."/>
            <person name="Davis R.W."/>
        </authorList>
    </citation>
    <scope>NUCLEOTIDE SEQUENCE [LARGE SCALE GENOMIC DNA]</scope>
    <source>
        <strain>ATCC VR-885 / DSM 19411 / UW-3/Cx</strain>
    </source>
</reference>
<protein>
    <recommendedName>
        <fullName evidence="1">Glucose-6-phosphate 1-dehydrogenase</fullName>
        <shortName evidence="1">G6PD</shortName>
        <ecNumber evidence="1">1.1.1.49</ecNumber>
    </recommendedName>
</protein>
<comment type="function">
    <text evidence="1">Catalyzes the oxidation of glucose 6-phosphate to 6-phosphogluconolactone.</text>
</comment>
<comment type="catalytic activity">
    <reaction evidence="1">
        <text>D-glucose 6-phosphate + NADP(+) = 6-phospho-D-glucono-1,5-lactone + NADPH + H(+)</text>
        <dbReference type="Rhea" id="RHEA:15841"/>
        <dbReference type="ChEBI" id="CHEBI:15378"/>
        <dbReference type="ChEBI" id="CHEBI:57783"/>
        <dbReference type="ChEBI" id="CHEBI:57955"/>
        <dbReference type="ChEBI" id="CHEBI:58349"/>
        <dbReference type="ChEBI" id="CHEBI:61548"/>
        <dbReference type="EC" id="1.1.1.49"/>
    </reaction>
</comment>
<comment type="pathway">
    <text evidence="1">Carbohydrate degradation; pentose phosphate pathway; D-ribulose 5-phosphate from D-glucose 6-phosphate (oxidative stage): step 1/3.</text>
</comment>
<comment type="similarity">
    <text evidence="1">Belongs to the glucose-6-phosphate dehydrogenase family.</text>
</comment>
<name>G6PD_CHLTR</name>
<evidence type="ECO:0000255" key="1">
    <source>
        <dbReference type="HAMAP-Rule" id="MF_00966"/>
    </source>
</evidence>